<evidence type="ECO:0000250" key="1"/>
<evidence type="ECO:0000250" key="2">
    <source>
        <dbReference type="UniProtKB" id="P61925"/>
    </source>
</evidence>
<evidence type="ECO:0000256" key="3">
    <source>
        <dbReference type="SAM" id="MobiDB-lite"/>
    </source>
</evidence>
<evidence type="ECO:0000305" key="4"/>
<evidence type="ECO:0007829" key="5">
    <source>
        <dbReference type="PDB" id="4DFX"/>
    </source>
</evidence>
<sequence length="76" mass="7960">MTDVETTYADFIASGRTGRRNAIHDILVSSASGNSNELALKLAGLDINKTEGEDDGQRSSTEQSGEAQGEAAKSES</sequence>
<reference key="1">
    <citation type="journal article" date="1991" name="J. Biol. Chem.">
        <title>Isolation and characterization of cDNA clones for an inhibitor protein of cAMP-dependent protein kinase.</title>
        <authorList>
            <person name="Olsen S.R."/>
            <person name="Uhler M.D."/>
        </authorList>
    </citation>
    <scope>NUCLEOTIDE SEQUENCE [MRNA]</scope>
    <source>
        <tissue>Brain</tissue>
    </source>
</reference>
<reference key="2">
    <citation type="journal article" date="2005" name="Science">
        <title>The transcriptional landscape of the mammalian genome.</title>
        <authorList>
            <person name="Carninci P."/>
            <person name="Kasukawa T."/>
            <person name="Katayama S."/>
            <person name="Gough J."/>
            <person name="Frith M.C."/>
            <person name="Maeda N."/>
            <person name="Oyama R."/>
            <person name="Ravasi T."/>
            <person name="Lenhard B."/>
            <person name="Wells C."/>
            <person name="Kodzius R."/>
            <person name="Shimokawa K."/>
            <person name="Bajic V.B."/>
            <person name="Brenner S.E."/>
            <person name="Batalov S."/>
            <person name="Forrest A.R."/>
            <person name="Zavolan M."/>
            <person name="Davis M.J."/>
            <person name="Wilming L.G."/>
            <person name="Aidinis V."/>
            <person name="Allen J.E."/>
            <person name="Ambesi-Impiombato A."/>
            <person name="Apweiler R."/>
            <person name="Aturaliya R.N."/>
            <person name="Bailey T.L."/>
            <person name="Bansal M."/>
            <person name="Baxter L."/>
            <person name="Beisel K.W."/>
            <person name="Bersano T."/>
            <person name="Bono H."/>
            <person name="Chalk A.M."/>
            <person name="Chiu K.P."/>
            <person name="Choudhary V."/>
            <person name="Christoffels A."/>
            <person name="Clutterbuck D.R."/>
            <person name="Crowe M.L."/>
            <person name="Dalla E."/>
            <person name="Dalrymple B.P."/>
            <person name="de Bono B."/>
            <person name="Della Gatta G."/>
            <person name="di Bernardo D."/>
            <person name="Down T."/>
            <person name="Engstrom P."/>
            <person name="Fagiolini M."/>
            <person name="Faulkner G."/>
            <person name="Fletcher C.F."/>
            <person name="Fukushima T."/>
            <person name="Furuno M."/>
            <person name="Futaki S."/>
            <person name="Gariboldi M."/>
            <person name="Georgii-Hemming P."/>
            <person name="Gingeras T.R."/>
            <person name="Gojobori T."/>
            <person name="Green R.E."/>
            <person name="Gustincich S."/>
            <person name="Harbers M."/>
            <person name="Hayashi Y."/>
            <person name="Hensch T.K."/>
            <person name="Hirokawa N."/>
            <person name="Hill D."/>
            <person name="Huminiecki L."/>
            <person name="Iacono M."/>
            <person name="Ikeo K."/>
            <person name="Iwama A."/>
            <person name="Ishikawa T."/>
            <person name="Jakt M."/>
            <person name="Kanapin A."/>
            <person name="Katoh M."/>
            <person name="Kawasawa Y."/>
            <person name="Kelso J."/>
            <person name="Kitamura H."/>
            <person name="Kitano H."/>
            <person name="Kollias G."/>
            <person name="Krishnan S.P."/>
            <person name="Kruger A."/>
            <person name="Kummerfeld S.K."/>
            <person name="Kurochkin I.V."/>
            <person name="Lareau L.F."/>
            <person name="Lazarevic D."/>
            <person name="Lipovich L."/>
            <person name="Liu J."/>
            <person name="Liuni S."/>
            <person name="McWilliam S."/>
            <person name="Madan Babu M."/>
            <person name="Madera M."/>
            <person name="Marchionni L."/>
            <person name="Matsuda H."/>
            <person name="Matsuzawa S."/>
            <person name="Miki H."/>
            <person name="Mignone F."/>
            <person name="Miyake S."/>
            <person name="Morris K."/>
            <person name="Mottagui-Tabar S."/>
            <person name="Mulder N."/>
            <person name="Nakano N."/>
            <person name="Nakauchi H."/>
            <person name="Ng P."/>
            <person name="Nilsson R."/>
            <person name="Nishiguchi S."/>
            <person name="Nishikawa S."/>
            <person name="Nori F."/>
            <person name="Ohara O."/>
            <person name="Okazaki Y."/>
            <person name="Orlando V."/>
            <person name="Pang K.C."/>
            <person name="Pavan W.J."/>
            <person name="Pavesi G."/>
            <person name="Pesole G."/>
            <person name="Petrovsky N."/>
            <person name="Piazza S."/>
            <person name="Reed J."/>
            <person name="Reid J.F."/>
            <person name="Ring B.Z."/>
            <person name="Ringwald M."/>
            <person name="Rost B."/>
            <person name="Ruan Y."/>
            <person name="Salzberg S.L."/>
            <person name="Sandelin A."/>
            <person name="Schneider C."/>
            <person name="Schoenbach C."/>
            <person name="Sekiguchi K."/>
            <person name="Semple C.A."/>
            <person name="Seno S."/>
            <person name="Sessa L."/>
            <person name="Sheng Y."/>
            <person name="Shibata Y."/>
            <person name="Shimada H."/>
            <person name="Shimada K."/>
            <person name="Silva D."/>
            <person name="Sinclair B."/>
            <person name="Sperling S."/>
            <person name="Stupka E."/>
            <person name="Sugiura K."/>
            <person name="Sultana R."/>
            <person name="Takenaka Y."/>
            <person name="Taki K."/>
            <person name="Tammoja K."/>
            <person name="Tan S.L."/>
            <person name="Tang S."/>
            <person name="Taylor M.S."/>
            <person name="Tegner J."/>
            <person name="Teichmann S.A."/>
            <person name="Ueda H.R."/>
            <person name="van Nimwegen E."/>
            <person name="Verardo R."/>
            <person name="Wei C.L."/>
            <person name="Yagi K."/>
            <person name="Yamanishi H."/>
            <person name="Zabarovsky E."/>
            <person name="Zhu S."/>
            <person name="Zimmer A."/>
            <person name="Hide W."/>
            <person name="Bult C."/>
            <person name="Grimmond S.M."/>
            <person name="Teasdale R.D."/>
            <person name="Liu E.T."/>
            <person name="Brusic V."/>
            <person name="Quackenbush J."/>
            <person name="Wahlestedt C."/>
            <person name="Mattick J.S."/>
            <person name="Hume D.A."/>
            <person name="Kai C."/>
            <person name="Sasaki D."/>
            <person name="Tomaru Y."/>
            <person name="Fukuda S."/>
            <person name="Kanamori-Katayama M."/>
            <person name="Suzuki M."/>
            <person name="Aoki J."/>
            <person name="Arakawa T."/>
            <person name="Iida J."/>
            <person name="Imamura K."/>
            <person name="Itoh M."/>
            <person name="Kato T."/>
            <person name="Kawaji H."/>
            <person name="Kawagashira N."/>
            <person name="Kawashima T."/>
            <person name="Kojima M."/>
            <person name="Kondo S."/>
            <person name="Konno H."/>
            <person name="Nakano K."/>
            <person name="Ninomiya N."/>
            <person name="Nishio T."/>
            <person name="Okada M."/>
            <person name="Plessy C."/>
            <person name="Shibata K."/>
            <person name="Shiraki T."/>
            <person name="Suzuki S."/>
            <person name="Tagami M."/>
            <person name="Waki K."/>
            <person name="Watahiki A."/>
            <person name="Okamura-Oho Y."/>
            <person name="Suzuki H."/>
            <person name="Kawai J."/>
            <person name="Hayashizaki Y."/>
        </authorList>
    </citation>
    <scope>NUCLEOTIDE SEQUENCE [LARGE SCALE MRNA]</scope>
    <source>
        <strain>C57BL/6J</strain>
        <tissue>Brain cortex</tissue>
    </source>
</reference>
<reference key="3">
    <citation type="submission" date="2005-09" db="EMBL/GenBank/DDBJ databases">
        <authorList>
            <person name="Mural R.J."/>
            <person name="Adams M.D."/>
            <person name="Myers E.W."/>
            <person name="Smith H.O."/>
            <person name="Venter J.C."/>
        </authorList>
    </citation>
    <scope>NUCLEOTIDE SEQUENCE [LARGE SCALE GENOMIC DNA]</scope>
</reference>
<reference key="4">
    <citation type="journal article" date="2004" name="Genome Res.">
        <title>The status, quality, and expansion of the NIH full-length cDNA project: the Mammalian Gene Collection (MGC).</title>
        <authorList>
            <consortium name="The MGC Project Team"/>
        </authorList>
    </citation>
    <scope>NUCLEOTIDE SEQUENCE [LARGE SCALE MRNA]</scope>
    <source>
        <tissue>Olfactory epithelium</tissue>
    </source>
</reference>
<reference key="5">
    <citation type="journal article" date="2010" name="Cell">
        <title>A tissue-specific atlas of mouse protein phosphorylation and expression.</title>
        <authorList>
            <person name="Huttlin E.L."/>
            <person name="Jedrychowski M.P."/>
            <person name="Elias J.E."/>
            <person name="Goswami T."/>
            <person name="Rad R."/>
            <person name="Beausoleil S.A."/>
            <person name="Villen J."/>
            <person name="Haas W."/>
            <person name="Sowa M.E."/>
            <person name="Gygi S.P."/>
        </authorList>
    </citation>
    <scope>IDENTIFICATION BY MASS SPECTROMETRY [LARGE SCALE ANALYSIS]</scope>
    <source>
        <tissue>Brain</tissue>
    </source>
</reference>
<reference key="6">
    <citation type="journal article" date="1993" name="Biochemistry">
        <title>Crystal structure of the catalytic subunit of cAMP-dependent protein kinase complexed with MgATP and peptide inhibitor.</title>
        <authorList>
            <person name="Zheng J."/>
            <person name="Knighton D.R."/>
            <person name="ten Eyck L.F."/>
            <person name="Karlsson R."/>
            <person name="Xuong N.-H."/>
            <person name="Taylor S.S."/>
            <person name="Sowadski J.M."/>
        </authorList>
    </citation>
    <scope>X-RAY CRYSTALLOGRAPHY (2.0 ANGSTROMS) OF 6-25 IN COMPLEX WITH PRKACA</scope>
</reference>
<organism>
    <name type="scientific">Mus musculus</name>
    <name type="common">Mouse</name>
    <dbReference type="NCBI Taxonomy" id="10090"/>
    <lineage>
        <taxon>Eukaryota</taxon>
        <taxon>Metazoa</taxon>
        <taxon>Chordata</taxon>
        <taxon>Craniata</taxon>
        <taxon>Vertebrata</taxon>
        <taxon>Euteleostomi</taxon>
        <taxon>Mammalia</taxon>
        <taxon>Eutheria</taxon>
        <taxon>Euarchontoglires</taxon>
        <taxon>Glires</taxon>
        <taxon>Rodentia</taxon>
        <taxon>Myomorpha</taxon>
        <taxon>Muroidea</taxon>
        <taxon>Muridae</taxon>
        <taxon>Murinae</taxon>
        <taxon>Mus</taxon>
        <taxon>Mus</taxon>
    </lineage>
</organism>
<proteinExistence type="evidence at protein level"/>
<comment type="function">
    <text>Extremely potent competitive inhibitor of cAMP-dependent protein kinase activity, this protein interacts with the catalytic subunit of the enzyme after the cAMP-induced dissociation of its regulatory chains.</text>
</comment>
<comment type="interaction">
    <interactant intactId="EBI-2931786">
        <id>P63248</id>
    </interactant>
    <interactant intactId="EBI-400564">
        <id>P05132</id>
        <label>Prkaca</label>
    </interactant>
    <organismsDiffer>false</organismsDiffer>
    <experiments>4</experiments>
</comment>
<comment type="tissue specificity">
    <text>Present at high levels in skeletal muscle and brain but is present at lower levels in heart, testis and liver.</text>
</comment>
<comment type="miscellaneous">
    <text evidence="1">The inhibitory site contains regions very similar to the hinge regions (sites that directly interact with the enzyme active site) and 'pseudosubstrate site' of the regulatory chains; but, unlike these chains, PKI does not contain cAMP-binding sites. The arginine residues within the inhibitory site are essential for inhibition and recognition of the enzyme active site (By similarity).</text>
</comment>
<comment type="similarity">
    <text evidence="4">Belongs to the PKI family.</text>
</comment>
<gene>
    <name type="primary">Pkia</name>
</gene>
<dbReference type="EMBL" id="M63554">
    <property type="protein sequence ID" value="AAA39940.1"/>
    <property type="molecule type" value="mRNA"/>
</dbReference>
<dbReference type="EMBL" id="AK139347">
    <property type="protein sequence ID" value="BAE23970.1"/>
    <property type="molecule type" value="mRNA"/>
</dbReference>
<dbReference type="EMBL" id="CH466577">
    <property type="protein sequence ID" value="EDL05208.1"/>
    <property type="molecule type" value="Genomic_DNA"/>
</dbReference>
<dbReference type="EMBL" id="CH466577">
    <property type="protein sequence ID" value="EDL05209.1"/>
    <property type="molecule type" value="Genomic_DNA"/>
</dbReference>
<dbReference type="EMBL" id="BC048244">
    <property type="protein sequence ID" value="AAH48244.1"/>
    <property type="molecule type" value="mRNA"/>
</dbReference>
<dbReference type="CCDS" id="CCDS38383.1"/>
<dbReference type="PIR" id="A40536">
    <property type="entry name" value="A40536"/>
</dbReference>
<dbReference type="RefSeq" id="NP_001397444.1">
    <property type="nucleotide sequence ID" value="NM_001410515.1"/>
</dbReference>
<dbReference type="RefSeq" id="NP_001397445.1">
    <property type="nucleotide sequence ID" value="NM_001410516.1"/>
</dbReference>
<dbReference type="RefSeq" id="NP_001397449.1">
    <property type="nucleotide sequence ID" value="NM_001410520.1"/>
</dbReference>
<dbReference type="RefSeq" id="NP_001397453.1">
    <property type="nucleotide sequence ID" value="NM_001410524.1"/>
</dbReference>
<dbReference type="RefSeq" id="NP_001397454.1">
    <property type="nucleotide sequence ID" value="NM_001410525.1"/>
</dbReference>
<dbReference type="RefSeq" id="NP_001397455.1">
    <property type="nucleotide sequence ID" value="NM_001410526.1"/>
</dbReference>
<dbReference type="RefSeq" id="NP_001397456.1">
    <property type="nucleotide sequence ID" value="NM_001410527.1"/>
</dbReference>
<dbReference type="RefSeq" id="NP_032888.1">
    <property type="nucleotide sequence ID" value="NM_008862.4"/>
</dbReference>
<dbReference type="RefSeq" id="XP_036018835.1">
    <property type="nucleotide sequence ID" value="XM_036162942.1"/>
</dbReference>
<dbReference type="PDB" id="1APM">
    <property type="method" value="X-ray"/>
    <property type="resolution" value="2.00 A"/>
    <property type="chains" value="I=6-25"/>
</dbReference>
<dbReference type="PDB" id="1ATP">
    <property type="method" value="X-ray"/>
    <property type="resolution" value="2.20 A"/>
    <property type="chains" value="I=6-25"/>
</dbReference>
<dbReference type="PDB" id="2CPK">
    <property type="method" value="X-ray"/>
    <property type="resolution" value="2.70 A"/>
    <property type="chains" value="I=6-25"/>
</dbReference>
<dbReference type="PDB" id="2GNF">
    <property type="method" value="X-ray"/>
    <property type="resolution" value="2.28 A"/>
    <property type="chains" value="I=6-25"/>
</dbReference>
<dbReference type="PDB" id="2GNG">
    <property type="method" value="X-ray"/>
    <property type="resolution" value="1.87 A"/>
    <property type="chains" value="I=6-25"/>
</dbReference>
<dbReference type="PDB" id="2QUR">
    <property type="method" value="X-ray"/>
    <property type="resolution" value="2.50 A"/>
    <property type="chains" value="B=6-25"/>
</dbReference>
<dbReference type="PDB" id="3FJQ">
    <property type="method" value="X-ray"/>
    <property type="resolution" value="1.60 A"/>
    <property type="chains" value="I=6-25"/>
</dbReference>
<dbReference type="PDB" id="3OW3">
    <property type="method" value="X-ray"/>
    <property type="resolution" value="1.90 A"/>
    <property type="chains" value="B=6-25"/>
</dbReference>
<dbReference type="PDB" id="3QAL">
    <property type="method" value="X-ray"/>
    <property type="resolution" value="1.70 A"/>
    <property type="chains" value="I=6-23"/>
</dbReference>
<dbReference type="PDB" id="3QAM">
    <property type="method" value="X-ray"/>
    <property type="resolution" value="1.92 A"/>
    <property type="chains" value="I=6-24"/>
</dbReference>
<dbReference type="PDB" id="4DFX">
    <property type="method" value="X-ray"/>
    <property type="resolution" value="1.35 A"/>
    <property type="chains" value="I=6-25"/>
</dbReference>
<dbReference type="PDB" id="4DFZ">
    <property type="method" value="X-ray"/>
    <property type="resolution" value="2.00 A"/>
    <property type="chains" value="I=6-25"/>
</dbReference>
<dbReference type="PDB" id="4DG0">
    <property type="method" value="X-ray"/>
    <property type="resolution" value="2.00 A"/>
    <property type="chains" value="I=6-25"/>
</dbReference>
<dbReference type="PDB" id="4DG2">
    <property type="method" value="X-ray"/>
    <property type="resolution" value="2.00 A"/>
    <property type="chains" value="I=6-25"/>
</dbReference>
<dbReference type="PDB" id="4DG3">
    <property type="method" value="X-ray"/>
    <property type="resolution" value="1.80 A"/>
    <property type="chains" value="A=6-25"/>
</dbReference>
<dbReference type="PDB" id="4DH1">
    <property type="method" value="X-ray"/>
    <property type="resolution" value="2.00 A"/>
    <property type="chains" value="I=6-25"/>
</dbReference>
<dbReference type="PDB" id="4DH3">
    <property type="method" value="X-ray"/>
    <property type="resolution" value="2.20 A"/>
    <property type="chains" value="I=6-25"/>
</dbReference>
<dbReference type="PDB" id="4DH5">
    <property type="method" value="X-ray"/>
    <property type="resolution" value="2.20 A"/>
    <property type="chains" value="I=6-25"/>
</dbReference>
<dbReference type="PDB" id="4DH7">
    <property type="method" value="X-ray"/>
    <property type="resolution" value="1.80 A"/>
    <property type="chains" value="I=6-25"/>
</dbReference>
<dbReference type="PDB" id="4DH8">
    <property type="method" value="X-ray"/>
    <property type="resolution" value="2.30 A"/>
    <property type="chains" value="I=6-25"/>
</dbReference>
<dbReference type="PDB" id="4HPT">
    <property type="method" value="X-ray"/>
    <property type="resolution" value="2.15 A"/>
    <property type="chains" value="I=6-25"/>
</dbReference>
<dbReference type="PDB" id="4HPU">
    <property type="method" value="X-ray"/>
    <property type="resolution" value="1.55 A"/>
    <property type="chains" value="I=6-25"/>
</dbReference>
<dbReference type="PDB" id="6F14">
    <property type="method" value="X-ray"/>
    <property type="resolution" value="1.87 A"/>
    <property type="chains" value="B=6-25"/>
</dbReference>
<dbReference type="PDB" id="6Y05">
    <property type="method" value="X-ray"/>
    <property type="resolution" value="1.70 A"/>
    <property type="chains" value="B=6-25"/>
</dbReference>
<dbReference type="PDB" id="6Y0B">
    <property type="method" value="X-ray"/>
    <property type="resolution" value="1.71 A"/>
    <property type="chains" value="B=6-25"/>
</dbReference>
<dbReference type="PDB" id="6Y2O">
    <property type="method" value="X-ray"/>
    <property type="resolution" value="2.01 A"/>
    <property type="chains" value="B=6-25"/>
</dbReference>
<dbReference type="PDB" id="6Y2U">
    <property type="method" value="X-ray"/>
    <property type="resolution" value="1.93 A"/>
    <property type="chains" value="B=6-25"/>
</dbReference>
<dbReference type="PDB" id="6Y89">
    <property type="method" value="X-ray"/>
    <property type="resolution" value="1.56 A"/>
    <property type="chains" value="B=6-25"/>
</dbReference>
<dbReference type="PDB" id="6Y8C">
    <property type="method" value="X-ray"/>
    <property type="resolution" value="1.76 A"/>
    <property type="chains" value="B=6-25"/>
</dbReference>
<dbReference type="PDB" id="6YNA">
    <property type="method" value="X-ray"/>
    <property type="resolution" value="1.47 A"/>
    <property type="chains" value="B=12-30"/>
</dbReference>
<dbReference type="PDB" id="6YNB">
    <property type="method" value="X-ray"/>
    <property type="resolution" value="1.72 A"/>
    <property type="chains" value="B=12-30"/>
</dbReference>
<dbReference type="PDB" id="6YNC">
    <property type="method" value="X-ray"/>
    <property type="resolution" value="1.40 A"/>
    <property type="chains" value="B=12-30"/>
</dbReference>
<dbReference type="PDB" id="6YNR">
    <property type="method" value="X-ray"/>
    <property type="resolution" value="1.90 A"/>
    <property type="chains" value="B=6-25"/>
</dbReference>
<dbReference type="PDB" id="6YNT">
    <property type="method" value="X-ray"/>
    <property type="resolution" value="1.52 A"/>
    <property type="chains" value="B=6-25"/>
</dbReference>
<dbReference type="PDB" id="6YOT">
    <property type="method" value="X-ray"/>
    <property type="resolution" value="1.96 A"/>
    <property type="chains" value="B=6-25"/>
</dbReference>
<dbReference type="PDB" id="6YPP">
    <property type="method" value="X-ray"/>
    <property type="resolution" value="1.75 A"/>
    <property type="chains" value="B=6-25"/>
</dbReference>
<dbReference type="PDB" id="6YQI">
    <property type="method" value="X-ray"/>
    <property type="resolution" value="1.42 A"/>
    <property type="chains" value="B=12-30"/>
</dbReference>
<dbReference type="PDB" id="6YQJ">
    <property type="method" value="X-ray"/>
    <property type="resolution" value="1.58 A"/>
    <property type="chains" value="B=12-30"/>
</dbReference>
<dbReference type="PDB" id="6YQK">
    <property type="method" value="X-ray"/>
    <property type="resolution" value="1.67 A"/>
    <property type="chains" value="B=12-30"/>
</dbReference>
<dbReference type="PDB" id="7AXT">
    <property type="method" value="X-ray"/>
    <property type="resolution" value="1.86 A"/>
    <property type="chains" value="B=6-25"/>
</dbReference>
<dbReference type="PDB" id="7AXV">
    <property type="method" value="X-ray"/>
    <property type="resolution" value="1.79 A"/>
    <property type="chains" value="B=6-25"/>
</dbReference>
<dbReference type="PDB" id="7AXW">
    <property type="method" value="X-ray"/>
    <property type="resolution" value="1.69 A"/>
    <property type="chains" value="B=6-25"/>
</dbReference>
<dbReference type="PDB" id="7BAQ">
    <property type="method" value="X-ray"/>
    <property type="resolution" value="1.54 A"/>
    <property type="chains" value="B=6-23"/>
</dbReference>
<dbReference type="PDB" id="7BB0">
    <property type="method" value="X-ray"/>
    <property type="resolution" value="1.75 A"/>
    <property type="chains" value="B=6-25"/>
</dbReference>
<dbReference type="PDB" id="7PID">
    <property type="method" value="X-ray"/>
    <property type="resolution" value="1.50 A"/>
    <property type="chains" value="B=6-25"/>
</dbReference>
<dbReference type="PDB" id="7PIE">
    <property type="method" value="X-ray"/>
    <property type="resolution" value="1.43 A"/>
    <property type="chains" value="B=6-25"/>
</dbReference>
<dbReference type="PDB" id="7PIF">
    <property type="method" value="X-ray"/>
    <property type="resolution" value="1.40 A"/>
    <property type="chains" value="B=6-25"/>
</dbReference>
<dbReference type="PDB" id="7PIG">
    <property type="method" value="X-ray"/>
    <property type="resolution" value="1.55 A"/>
    <property type="chains" value="B=6-25"/>
</dbReference>
<dbReference type="PDB" id="7PIH">
    <property type="method" value="X-ray"/>
    <property type="resolution" value="1.37 A"/>
    <property type="chains" value="B=6-25"/>
</dbReference>
<dbReference type="PDB" id="7PNS">
    <property type="method" value="X-ray"/>
    <property type="resolution" value="1.85 A"/>
    <property type="chains" value="B=6-25"/>
</dbReference>
<dbReference type="PDBsum" id="1APM"/>
<dbReference type="PDBsum" id="1ATP"/>
<dbReference type="PDBsum" id="2CPK"/>
<dbReference type="PDBsum" id="2GNF"/>
<dbReference type="PDBsum" id="2GNG"/>
<dbReference type="PDBsum" id="2QUR"/>
<dbReference type="PDBsum" id="3FJQ"/>
<dbReference type="PDBsum" id="3OW3"/>
<dbReference type="PDBsum" id="3QAL"/>
<dbReference type="PDBsum" id="3QAM"/>
<dbReference type="PDBsum" id="4DFX"/>
<dbReference type="PDBsum" id="4DFZ"/>
<dbReference type="PDBsum" id="4DG0"/>
<dbReference type="PDBsum" id="4DG2"/>
<dbReference type="PDBsum" id="4DG3"/>
<dbReference type="PDBsum" id="4DH1"/>
<dbReference type="PDBsum" id="4DH3"/>
<dbReference type="PDBsum" id="4DH5"/>
<dbReference type="PDBsum" id="4DH7"/>
<dbReference type="PDBsum" id="4DH8"/>
<dbReference type="PDBsum" id="4HPT"/>
<dbReference type="PDBsum" id="4HPU"/>
<dbReference type="PDBsum" id="6F14"/>
<dbReference type="PDBsum" id="6Y05"/>
<dbReference type="PDBsum" id="6Y0B"/>
<dbReference type="PDBsum" id="6Y2O"/>
<dbReference type="PDBsum" id="6Y2U"/>
<dbReference type="PDBsum" id="6Y89"/>
<dbReference type="PDBsum" id="6Y8C"/>
<dbReference type="PDBsum" id="6YNA"/>
<dbReference type="PDBsum" id="6YNB"/>
<dbReference type="PDBsum" id="6YNC"/>
<dbReference type="PDBsum" id="6YNR"/>
<dbReference type="PDBsum" id="6YNT"/>
<dbReference type="PDBsum" id="6YOT"/>
<dbReference type="PDBsum" id="6YPP"/>
<dbReference type="PDBsum" id="6YQI"/>
<dbReference type="PDBsum" id="6YQJ"/>
<dbReference type="PDBsum" id="6YQK"/>
<dbReference type="PDBsum" id="7AXT"/>
<dbReference type="PDBsum" id="7AXV"/>
<dbReference type="PDBsum" id="7AXW"/>
<dbReference type="PDBsum" id="7BAQ"/>
<dbReference type="PDBsum" id="7BB0"/>
<dbReference type="PDBsum" id="7PID"/>
<dbReference type="PDBsum" id="7PIE"/>
<dbReference type="PDBsum" id="7PIF"/>
<dbReference type="PDBsum" id="7PIG"/>
<dbReference type="PDBsum" id="7PIH"/>
<dbReference type="PDBsum" id="7PNS"/>
<dbReference type="BMRB" id="P63248"/>
<dbReference type="SMR" id="P63248"/>
<dbReference type="BioGRID" id="202207">
    <property type="interactions" value="4"/>
</dbReference>
<dbReference type="DIP" id="DIP-6087N"/>
<dbReference type="FunCoup" id="P63248">
    <property type="interactions" value="2283"/>
</dbReference>
<dbReference type="IntAct" id="P63248">
    <property type="interactions" value="2"/>
</dbReference>
<dbReference type="STRING" id="10090.ENSMUSP00000028999"/>
<dbReference type="GlyGen" id="P63248">
    <property type="glycosylation" value="1 site, 1 O-linked glycan (1 site)"/>
</dbReference>
<dbReference type="iPTMnet" id="P63248"/>
<dbReference type="PhosphoSitePlus" id="P63248"/>
<dbReference type="jPOST" id="P63248"/>
<dbReference type="PaxDb" id="10090-ENSMUSP00000028999"/>
<dbReference type="PeptideAtlas" id="P63248"/>
<dbReference type="ProteomicsDB" id="269496"/>
<dbReference type="Antibodypedia" id="52148">
    <property type="antibodies" value="63 antibodies from 17 providers"/>
</dbReference>
<dbReference type="DNASU" id="18767"/>
<dbReference type="Ensembl" id="ENSMUST00000028999.12">
    <property type="protein sequence ID" value="ENSMUSP00000028999.7"/>
    <property type="gene ID" value="ENSMUSG00000027499.13"/>
</dbReference>
<dbReference type="Ensembl" id="ENSMUST00000193330.2">
    <property type="protein sequence ID" value="ENSMUSP00000141466.2"/>
    <property type="gene ID" value="ENSMUSG00000027499.13"/>
</dbReference>
<dbReference type="GeneID" id="18767"/>
<dbReference type="KEGG" id="mmu:18767"/>
<dbReference type="UCSC" id="uc008oof.1">
    <property type="organism name" value="mouse"/>
</dbReference>
<dbReference type="AGR" id="MGI:104747"/>
<dbReference type="CTD" id="5569"/>
<dbReference type="MGI" id="MGI:104747">
    <property type="gene designation" value="Pkia"/>
</dbReference>
<dbReference type="VEuPathDB" id="HostDB:ENSMUSG00000027499"/>
<dbReference type="eggNOG" id="ENOG502S6JP">
    <property type="taxonomic scope" value="Eukaryota"/>
</dbReference>
<dbReference type="GeneTree" id="ENSGT00530000064276"/>
<dbReference type="HOGENOM" id="CLU_163471_2_0_1"/>
<dbReference type="InParanoid" id="P63248"/>
<dbReference type="OMA" id="HYKNHFS"/>
<dbReference type="OrthoDB" id="9934738at2759"/>
<dbReference type="PhylomeDB" id="P63248"/>
<dbReference type="TreeFam" id="TF330809"/>
<dbReference type="BioGRID-ORCS" id="18767">
    <property type="hits" value="0 hits in 77 CRISPR screens"/>
</dbReference>
<dbReference type="EvolutionaryTrace" id="P63248"/>
<dbReference type="PRO" id="PR:P63248"/>
<dbReference type="Proteomes" id="UP000000589">
    <property type="component" value="Chromosome 3"/>
</dbReference>
<dbReference type="RNAct" id="P63248">
    <property type="molecule type" value="protein"/>
</dbReference>
<dbReference type="Bgee" id="ENSMUSG00000027499">
    <property type="expression patterns" value="Expressed in barrel cortex and 256 other cell types or tissues"/>
</dbReference>
<dbReference type="ExpressionAtlas" id="P63248">
    <property type="expression patterns" value="baseline and differential"/>
</dbReference>
<dbReference type="GO" id="GO:0005737">
    <property type="term" value="C:cytoplasm"/>
    <property type="evidence" value="ECO:0000314"/>
    <property type="project" value="MGI"/>
</dbReference>
<dbReference type="GO" id="GO:0005634">
    <property type="term" value="C:nucleus"/>
    <property type="evidence" value="ECO:0000314"/>
    <property type="project" value="MGI"/>
</dbReference>
<dbReference type="GO" id="GO:0004862">
    <property type="term" value="F:cAMP-dependent protein kinase inhibitor activity"/>
    <property type="evidence" value="ECO:0000314"/>
    <property type="project" value="MGI"/>
</dbReference>
<dbReference type="GO" id="GO:0034236">
    <property type="term" value="F:protein kinase A catalytic subunit binding"/>
    <property type="evidence" value="ECO:0000353"/>
    <property type="project" value="CAFA"/>
</dbReference>
<dbReference type="GO" id="GO:0141162">
    <property type="term" value="P:negative regulation of cAMP/PKA signal transduction"/>
    <property type="evidence" value="ECO:0007669"/>
    <property type="project" value="Ensembl"/>
</dbReference>
<dbReference type="GO" id="GO:0042308">
    <property type="term" value="P:negative regulation of protein import into nucleus"/>
    <property type="evidence" value="ECO:0000314"/>
    <property type="project" value="MGI"/>
</dbReference>
<dbReference type="GO" id="GO:0000122">
    <property type="term" value="P:negative regulation of transcription by RNA polymerase II"/>
    <property type="evidence" value="ECO:0000314"/>
    <property type="project" value="MGI"/>
</dbReference>
<dbReference type="GO" id="GO:0010389">
    <property type="term" value="P:regulation of G2/M transition of mitotic cell cycle"/>
    <property type="evidence" value="ECO:0000315"/>
    <property type="project" value="MGI"/>
</dbReference>
<dbReference type="InterPro" id="IPR004171">
    <property type="entry name" value="cAMP_dep_PKI"/>
</dbReference>
<dbReference type="PANTHER" id="PTHR15416">
    <property type="entry name" value="CAMP-DEPENDENT PROTEIN KINASE INHIBITOR/PKI"/>
    <property type="match status" value="1"/>
</dbReference>
<dbReference type="Pfam" id="PF02827">
    <property type="entry name" value="PKI"/>
    <property type="match status" value="1"/>
</dbReference>
<dbReference type="PIRSF" id="PIRSF001667">
    <property type="entry name" value="PKI"/>
    <property type="match status" value="1"/>
</dbReference>
<feature type="initiator methionine" description="Removed" evidence="2">
    <location>
        <position position="1"/>
    </location>
</feature>
<feature type="chain" id="PRO_0000154533" description="cAMP-dependent protein kinase inhibitor alpha">
    <location>
        <begin position="2"/>
        <end position="76"/>
    </location>
</feature>
<feature type="region of interest" description="Disordered" evidence="3">
    <location>
        <begin position="49"/>
        <end position="76"/>
    </location>
</feature>
<feature type="site" description="Important for inhibition" evidence="1">
    <location>
        <position position="16"/>
    </location>
</feature>
<feature type="site" description="Important for inhibition" evidence="1">
    <location>
        <position position="19"/>
    </location>
</feature>
<feature type="site" description="Important for inhibition" evidence="1">
    <location>
        <position position="20"/>
    </location>
</feature>
<feature type="modified residue" description="N-acetylthreonine" evidence="2">
    <location>
        <position position="2"/>
    </location>
</feature>
<feature type="helix" evidence="5">
    <location>
        <begin position="7"/>
        <end position="12"/>
    </location>
</feature>
<name>IPKA_MOUSE</name>
<keyword id="KW-0002">3D-structure</keyword>
<keyword id="KW-0007">Acetylation</keyword>
<keyword id="KW-0649">Protein kinase inhibitor</keyword>
<keyword id="KW-1185">Reference proteome</keyword>
<accession>P63248</accession>
<accession>P27776</accession>
<accession>Q3UTL0</accession>
<protein>
    <recommendedName>
        <fullName>cAMP-dependent protein kinase inhibitor alpha</fullName>
        <shortName>PKI-alpha</shortName>
    </recommendedName>
    <alternativeName>
        <fullName>cAMP-dependent protein kinase inhibitor, muscle/brain isoform</fullName>
    </alternativeName>
</protein>